<geneLocation type="mitochondrion"/>
<comment type="function">
    <text evidence="2">Component of the ubiquinol-cytochrome c reductase complex (complex III or cytochrome b-c1 complex) that is part of the mitochondrial respiratory chain. The b-c1 complex mediates electron transfer from ubiquinol to cytochrome c. Contributes to the generation of a proton gradient across the mitochondrial membrane that is then used for ATP synthesis.</text>
</comment>
<comment type="cofactor">
    <cofactor evidence="2">
        <name>heme b</name>
        <dbReference type="ChEBI" id="CHEBI:60344"/>
    </cofactor>
    <text evidence="2">Binds 2 heme b groups non-covalently.</text>
</comment>
<comment type="subunit">
    <text evidence="2">The cytochrome bc1 complex contains 3 respiratory subunits (MT-CYB, CYC1 and UQCRFS1), 2 core proteins (UQCRC1 and UQCRC2) and probably 6 low-molecular weight proteins.</text>
</comment>
<comment type="subcellular location">
    <subcellularLocation>
        <location evidence="2">Mitochondrion inner membrane</location>
        <topology evidence="2">Multi-pass membrane protein</topology>
    </subcellularLocation>
</comment>
<comment type="miscellaneous">
    <text evidence="1">Heme 1 (or BL or b562) is low-potential and absorbs at about 562 nm, and heme 2 (or BH or b566) is high-potential and absorbs at about 566 nm.</text>
</comment>
<comment type="similarity">
    <text evidence="3 4">Belongs to the cytochrome b family.</text>
</comment>
<comment type="caution">
    <text evidence="2">The full-length protein contains only eight transmembrane helices, not nine as predicted by bioinformatics tools.</text>
</comment>
<gene>
    <name type="primary">mt-cyb</name>
    <name type="synonym">cob</name>
    <name type="synonym">cytb</name>
    <name type="synonym">mtcyb</name>
</gene>
<accession>Q9G3M2</accession>
<organism>
    <name type="scientific">Acipenser persicus</name>
    <name type="common">Persian sturgeon</name>
    <dbReference type="NCBI Taxonomy" id="61968"/>
    <lineage>
        <taxon>Eukaryota</taxon>
        <taxon>Metazoa</taxon>
        <taxon>Chordata</taxon>
        <taxon>Craniata</taxon>
        <taxon>Vertebrata</taxon>
        <taxon>Euteleostomi</taxon>
        <taxon>Actinopterygii</taxon>
        <taxon>Chondrostei</taxon>
        <taxon>Acipenseriformes</taxon>
        <taxon>Acipenseridae</taxon>
        <taxon>Acipenser</taxon>
    </lineage>
</organism>
<reference key="1">
    <citation type="journal article" date="2000" name="Genetics">
        <title>Heteroplasmy in the mtDNA control region of sturgeon (Acipenser, Huso and Scaphirhynchus).</title>
        <authorList>
            <person name="Ludwig A."/>
            <person name="May B."/>
            <person name="Debus L."/>
            <person name="Jenneckens I."/>
        </authorList>
    </citation>
    <scope>NUCLEOTIDE SEQUENCE [GENOMIC DNA]</scope>
    <source>
        <tissue>Blood</tissue>
    </source>
</reference>
<protein>
    <recommendedName>
        <fullName>Cytochrome b</fullName>
    </recommendedName>
    <alternativeName>
        <fullName>Complex III subunit 3</fullName>
    </alternativeName>
    <alternativeName>
        <fullName>Complex III subunit III</fullName>
    </alternativeName>
    <alternativeName>
        <fullName>Cytochrome b-c1 complex subunit 3</fullName>
    </alternativeName>
    <alternativeName>
        <fullName>Ubiquinol-cytochrome-c reductase complex cytochrome b subunit</fullName>
    </alternativeName>
</protein>
<proteinExistence type="inferred from homology"/>
<name>CYB_ACIPE</name>
<feature type="chain" id="PRO_0000060524" description="Cytochrome b">
    <location>
        <begin position="1"/>
        <end position="380"/>
    </location>
</feature>
<feature type="transmembrane region" description="Helical" evidence="2">
    <location>
        <begin position="33"/>
        <end position="53"/>
    </location>
</feature>
<feature type="transmembrane region" description="Helical" evidence="2">
    <location>
        <begin position="77"/>
        <end position="98"/>
    </location>
</feature>
<feature type="transmembrane region" description="Helical" evidence="2">
    <location>
        <begin position="113"/>
        <end position="133"/>
    </location>
</feature>
<feature type="transmembrane region" description="Helical" evidence="2">
    <location>
        <begin position="178"/>
        <end position="198"/>
    </location>
</feature>
<feature type="transmembrane region" description="Helical" evidence="2">
    <location>
        <begin position="226"/>
        <end position="246"/>
    </location>
</feature>
<feature type="transmembrane region" description="Helical" evidence="2">
    <location>
        <begin position="288"/>
        <end position="308"/>
    </location>
</feature>
<feature type="transmembrane region" description="Helical" evidence="2">
    <location>
        <begin position="320"/>
        <end position="340"/>
    </location>
</feature>
<feature type="transmembrane region" description="Helical" evidence="2">
    <location>
        <begin position="347"/>
        <end position="367"/>
    </location>
</feature>
<feature type="binding site" description="axial binding residue" evidence="2">
    <location>
        <position position="83"/>
    </location>
    <ligand>
        <name>heme b</name>
        <dbReference type="ChEBI" id="CHEBI:60344"/>
        <label>b562</label>
    </ligand>
    <ligandPart>
        <name>Fe</name>
        <dbReference type="ChEBI" id="CHEBI:18248"/>
    </ligandPart>
</feature>
<feature type="binding site" description="axial binding residue" evidence="2">
    <location>
        <position position="97"/>
    </location>
    <ligand>
        <name>heme b</name>
        <dbReference type="ChEBI" id="CHEBI:60344"/>
        <label>b566</label>
    </ligand>
    <ligandPart>
        <name>Fe</name>
        <dbReference type="ChEBI" id="CHEBI:18248"/>
    </ligandPart>
</feature>
<feature type="binding site" description="axial binding residue" evidence="2">
    <location>
        <position position="182"/>
    </location>
    <ligand>
        <name>heme b</name>
        <dbReference type="ChEBI" id="CHEBI:60344"/>
        <label>b562</label>
    </ligand>
    <ligandPart>
        <name>Fe</name>
        <dbReference type="ChEBI" id="CHEBI:18248"/>
    </ligandPart>
</feature>
<feature type="binding site" description="axial binding residue" evidence="2">
    <location>
        <position position="196"/>
    </location>
    <ligand>
        <name>heme b</name>
        <dbReference type="ChEBI" id="CHEBI:60344"/>
        <label>b566</label>
    </ligand>
    <ligandPart>
        <name>Fe</name>
        <dbReference type="ChEBI" id="CHEBI:18248"/>
    </ligandPart>
</feature>
<feature type="binding site" evidence="2">
    <location>
        <position position="201"/>
    </location>
    <ligand>
        <name>a ubiquinone</name>
        <dbReference type="ChEBI" id="CHEBI:16389"/>
    </ligand>
</feature>
<sequence length="380" mass="42401">MANIRKTHPLLKIINGAFIDLPTPSNISVWWNFGSLLGLCLVTQILTGLFLAMHYTADISTAFSSVAHICRDVNYGWLIRNIHANGASFFFICLYLHVARGMYYGSYLQKETWNIGVILLLLTMMTAFVGYVLPWGQMSFWGATVITNLLSAFPYIGDTLVQWIWGGFSVDNATLTRFFAFHFLLPFVIAGASMIHLLFLHQTGSNNPTGLNSDADKVTFHPYFSYKDLLGFILMLVGLTSVALFSPNLLGDPDNFTPANPLVTPPHIKPEWYFLFAYAILRSIPNKLGGVLALLFSILVLMLVPMLHTSKQRGNTFRPLSQILFWALVADMLVLTWIGGQPVEHPFVLIGQAASTVYFALFLIALPLTGLLENKALNWN</sequence>
<keyword id="KW-0249">Electron transport</keyword>
<keyword id="KW-0349">Heme</keyword>
<keyword id="KW-0408">Iron</keyword>
<keyword id="KW-0472">Membrane</keyword>
<keyword id="KW-0479">Metal-binding</keyword>
<keyword id="KW-0496">Mitochondrion</keyword>
<keyword id="KW-0999">Mitochondrion inner membrane</keyword>
<keyword id="KW-0679">Respiratory chain</keyword>
<keyword id="KW-0812">Transmembrane</keyword>
<keyword id="KW-1133">Transmembrane helix</keyword>
<keyword id="KW-0813">Transport</keyword>
<keyword id="KW-0830">Ubiquinone</keyword>
<dbReference type="EMBL" id="AJ245835">
    <property type="protein sequence ID" value="CAC19537.1"/>
    <property type="molecule type" value="Genomic_DNA"/>
</dbReference>
<dbReference type="SMR" id="Q9G3M2"/>
<dbReference type="GO" id="GO:0005743">
    <property type="term" value="C:mitochondrial inner membrane"/>
    <property type="evidence" value="ECO:0007669"/>
    <property type="project" value="UniProtKB-SubCell"/>
</dbReference>
<dbReference type="GO" id="GO:0045275">
    <property type="term" value="C:respiratory chain complex III"/>
    <property type="evidence" value="ECO:0007669"/>
    <property type="project" value="InterPro"/>
</dbReference>
<dbReference type="GO" id="GO:0046872">
    <property type="term" value="F:metal ion binding"/>
    <property type="evidence" value="ECO:0007669"/>
    <property type="project" value="UniProtKB-KW"/>
</dbReference>
<dbReference type="GO" id="GO:0008121">
    <property type="term" value="F:ubiquinol-cytochrome-c reductase activity"/>
    <property type="evidence" value="ECO:0007669"/>
    <property type="project" value="InterPro"/>
</dbReference>
<dbReference type="GO" id="GO:0006122">
    <property type="term" value="P:mitochondrial electron transport, ubiquinol to cytochrome c"/>
    <property type="evidence" value="ECO:0007669"/>
    <property type="project" value="TreeGrafter"/>
</dbReference>
<dbReference type="CDD" id="cd00290">
    <property type="entry name" value="cytochrome_b_C"/>
    <property type="match status" value="1"/>
</dbReference>
<dbReference type="CDD" id="cd00284">
    <property type="entry name" value="Cytochrome_b_N"/>
    <property type="match status" value="1"/>
</dbReference>
<dbReference type="FunFam" id="1.20.810.10:FF:000002">
    <property type="entry name" value="Cytochrome b"/>
    <property type="match status" value="1"/>
</dbReference>
<dbReference type="Gene3D" id="1.20.810.10">
    <property type="entry name" value="Cytochrome Bc1 Complex, Chain C"/>
    <property type="match status" value="1"/>
</dbReference>
<dbReference type="InterPro" id="IPR005798">
    <property type="entry name" value="Cyt_b/b6_C"/>
</dbReference>
<dbReference type="InterPro" id="IPR036150">
    <property type="entry name" value="Cyt_b/b6_C_sf"/>
</dbReference>
<dbReference type="InterPro" id="IPR005797">
    <property type="entry name" value="Cyt_b/b6_N"/>
</dbReference>
<dbReference type="InterPro" id="IPR027387">
    <property type="entry name" value="Cytb/b6-like_sf"/>
</dbReference>
<dbReference type="InterPro" id="IPR030689">
    <property type="entry name" value="Cytochrome_b"/>
</dbReference>
<dbReference type="InterPro" id="IPR048260">
    <property type="entry name" value="Cytochrome_b_C_euk/bac"/>
</dbReference>
<dbReference type="InterPro" id="IPR048259">
    <property type="entry name" value="Cytochrome_b_N_euk/bac"/>
</dbReference>
<dbReference type="InterPro" id="IPR016174">
    <property type="entry name" value="Di-haem_cyt_TM"/>
</dbReference>
<dbReference type="PANTHER" id="PTHR19271">
    <property type="entry name" value="CYTOCHROME B"/>
    <property type="match status" value="1"/>
</dbReference>
<dbReference type="PANTHER" id="PTHR19271:SF16">
    <property type="entry name" value="CYTOCHROME B"/>
    <property type="match status" value="1"/>
</dbReference>
<dbReference type="Pfam" id="PF00032">
    <property type="entry name" value="Cytochrom_B_C"/>
    <property type="match status" value="1"/>
</dbReference>
<dbReference type="Pfam" id="PF00033">
    <property type="entry name" value="Cytochrome_B"/>
    <property type="match status" value="1"/>
</dbReference>
<dbReference type="PIRSF" id="PIRSF038885">
    <property type="entry name" value="COB"/>
    <property type="match status" value="1"/>
</dbReference>
<dbReference type="SUPFAM" id="SSF81648">
    <property type="entry name" value="a domain/subunit of cytochrome bc1 complex (Ubiquinol-cytochrome c reductase)"/>
    <property type="match status" value="1"/>
</dbReference>
<dbReference type="SUPFAM" id="SSF81342">
    <property type="entry name" value="Transmembrane di-heme cytochromes"/>
    <property type="match status" value="1"/>
</dbReference>
<dbReference type="PROSITE" id="PS51003">
    <property type="entry name" value="CYTB_CTER"/>
    <property type="match status" value="1"/>
</dbReference>
<dbReference type="PROSITE" id="PS51002">
    <property type="entry name" value="CYTB_NTER"/>
    <property type="match status" value="1"/>
</dbReference>
<evidence type="ECO:0000250" key="1"/>
<evidence type="ECO:0000250" key="2">
    <source>
        <dbReference type="UniProtKB" id="P00157"/>
    </source>
</evidence>
<evidence type="ECO:0000255" key="3">
    <source>
        <dbReference type="PROSITE-ProRule" id="PRU00967"/>
    </source>
</evidence>
<evidence type="ECO:0000255" key="4">
    <source>
        <dbReference type="PROSITE-ProRule" id="PRU00968"/>
    </source>
</evidence>